<accession>B3QM44</accession>
<dbReference type="EC" id="2.4.2.18" evidence="1"/>
<dbReference type="EMBL" id="CP001099">
    <property type="protein sequence ID" value="ACF10997.1"/>
    <property type="molecule type" value="Genomic_DNA"/>
</dbReference>
<dbReference type="RefSeq" id="WP_012501830.1">
    <property type="nucleotide sequence ID" value="NC_011027.1"/>
</dbReference>
<dbReference type="SMR" id="B3QM44"/>
<dbReference type="STRING" id="517417.Cpar_0577"/>
<dbReference type="KEGG" id="cpc:Cpar_0577"/>
<dbReference type="eggNOG" id="COG0547">
    <property type="taxonomic scope" value="Bacteria"/>
</dbReference>
<dbReference type="HOGENOM" id="CLU_034315_2_1_10"/>
<dbReference type="OrthoDB" id="9806430at2"/>
<dbReference type="UniPathway" id="UPA00035">
    <property type="reaction ID" value="UER00041"/>
</dbReference>
<dbReference type="Proteomes" id="UP000008811">
    <property type="component" value="Chromosome"/>
</dbReference>
<dbReference type="GO" id="GO:0005829">
    <property type="term" value="C:cytosol"/>
    <property type="evidence" value="ECO:0007669"/>
    <property type="project" value="TreeGrafter"/>
</dbReference>
<dbReference type="GO" id="GO:0004048">
    <property type="term" value="F:anthranilate phosphoribosyltransferase activity"/>
    <property type="evidence" value="ECO:0007669"/>
    <property type="project" value="UniProtKB-UniRule"/>
</dbReference>
<dbReference type="GO" id="GO:0000287">
    <property type="term" value="F:magnesium ion binding"/>
    <property type="evidence" value="ECO:0007669"/>
    <property type="project" value="UniProtKB-UniRule"/>
</dbReference>
<dbReference type="GO" id="GO:0000162">
    <property type="term" value="P:L-tryptophan biosynthetic process"/>
    <property type="evidence" value="ECO:0007669"/>
    <property type="project" value="UniProtKB-UniRule"/>
</dbReference>
<dbReference type="FunFam" id="3.40.1030.10:FF:000002">
    <property type="entry name" value="Anthranilate phosphoribosyltransferase"/>
    <property type="match status" value="1"/>
</dbReference>
<dbReference type="Gene3D" id="3.40.1030.10">
    <property type="entry name" value="Nucleoside phosphorylase/phosphoribosyltransferase catalytic domain"/>
    <property type="match status" value="1"/>
</dbReference>
<dbReference type="Gene3D" id="1.20.970.10">
    <property type="entry name" value="Transferase, Pyrimidine Nucleoside Phosphorylase, Chain C"/>
    <property type="match status" value="1"/>
</dbReference>
<dbReference type="HAMAP" id="MF_00211">
    <property type="entry name" value="TrpD"/>
    <property type="match status" value="1"/>
</dbReference>
<dbReference type="InterPro" id="IPR005940">
    <property type="entry name" value="Anthranilate_Pribosyl_Tfrase"/>
</dbReference>
<dbReference type="InterPro" id="IPR000312">
    <property type="entry name" value="Glycosyl_Trfase_fam3"/>
</dbReference>
<dbReference type="InterPro" id="IPR017459">
    <property type="entry name" value="Glycosyl_Trfase_fam3_N_dom"/>
</dbReference>
<dbReference type="InterPro" id="IPR036320">
    <property type="entry name" value="Glycosyl_Trfase_fam3_N_dom_sf"/>
</dbReference>
<dbReference type="InterPro" id="IPR035902">
    <property type="entry name" value="Nuc_phospho_transferase"/>
</dbReference>
<dbReference type="NCBIfam" id="TIGR01245">
    <property type="entry name" value="trpD"/>
    <property type="match status" value="1"/>
</dbReference>
<dbReference type="PANTHER" id="PTHR43285">
    <property type="entry name" value="ANTHRANILATE PHOSPHORIBOSYLTRANSFERASE"/>
    <property type="match status" value="1"/>
</dbReference>
<dbReference type="PANTHER" id="PTHR43285:SF2">
    <property type="entry name" value="ANTHRANILATE PHOSPHORIBOSYLTRANSFERASE"/>
    <property type="match status" value="1"/>
</dbReference>
<dbReference type="Pfam" id="PF02885">
    <property type="entry name" value="Glycos_trans_3N"/>
    <property type="match status" value="1"/>
</dbReference>
<dbReference type="Pfam" id="PF00591">
    <property type="entry name" value="Glycos_transf_3"/>
    <property type="match status" value="1"/>
</dbReference>
<dbReference type="SUPFAM" id="SSF52418">
    <property type="entry name" value="Nucleoside phosphorylase/phosphoribosyltransferase catalytic domain"/>
    <property type="match status" value="1"/>
</dbReference>
<dbReference type="SUPFAM" id="SSF47648">
    <property type="entry name" value="Nucleoside phosphorylase/phosphoribosyltransferase N-terminal domain"/>
    <property type="match status" value="1"/>
</dbReference>
<name>TRPD_CHLP8</name>
<comment type="function">
    <text evidence="1">Catalyzes the transfer of the phosphoribosyl group of 5-phosphorylribose-1-pyrophosphate (PRPP) to anthranilate to yield N-(5'-phosphoribosyl)-anthranilate (PRA).</text>
</comment>
<comment type="catalytic activity">
    <reaction evidence="1">
        <text>N-(5-phospho-beta-D-ribosyl)anthranilate + diphosphate = 5-phospho-alpha-D-ribose 1-diphosphate + anthranilate</text>
        <dbReference type="Rhea" id="RHEA:11768"/>
        <dbReference type="ChEBI" id="CHEBI:16567"/>
        <dbReference type="ChEBI" id="CHEBI:18277"/>
        <dbReference type="ChEBI" id="CHEBI:33019"/>
        <dbReference type="ChEBI" id="CHEBI:58017"/>
        <dbReference type="EC" id="2.4.2.18"/>
    </reaction>
</comment>
<comment type="cofactor">
    <cofactor evidence="1">
        <name>Mg(2+)</name>
        <dbReference type="ChEBI" id="CHEBI:18420"/>
    </cofactor>
    <text evidence="1">Binds 2 magnesium ions per monomer.</text>
</comment>
<comment type="pathway">
    <text evidence="1">Amino-acid biosynthesis; L-tryptophan biosynthesis; L-tryptophan from chorismate: step 2/5.</text>
</comment>
<comment type="subunit">
    <text evidence="1">Homodimer.</text>
</comment>
<comment type="similarity">
    <text evidence="1">Belongs to the anthranilate phosphoribosyltransferase family.</text>
</comment>
<reference key="1">
    <citation type="submission" date="2008-06" db="EMBL/GenBank/DDBJ databases">
        <title>Complete sequence of Chlorobaculum parvum NCIB 8327.</title>
        <authorList>
            <consortium name="US DOE Joint Genome Institute"/>
            <person name="Lucas S."/>
            <person name="Copeland A."/>
            <person name="Lapidus A."/>
            <person name="Glavina del Rio T."/>
            <person name="Dalin E."/>
            <person name="Tice H."/>
            <person name="Bruce D."/>
            <person name="Goodwin L."/>
            <person name="Pitluck S."/>
            <person name="Schmutz J."/>
            <person name="Larimer F."/>
            <person name="Land M."/>
            <person name="Hauser L."/>
            <person name="Kyrpides N."/>
            <person name="Mikhailova N."/>
            <person name="Zhao F."/>
            <person name="Li T."/>
            <person name="Liu Z."/>
            <person name="Overmann J."/>
            <person name="Bryant D.A."/>
            <person name="Richardson P."/>
        </authorList>
    </citation>
    <scope>NUCLEOTIDE SEQUENCE [LARGE SCALE GENOMIC DNA]</scope>
    <source>
        <strain>DSM 263 / NCIMB 8327</strain>
    </source>
</reference>
<keyword id="KW-0028">Amino-acid biosynthesis</keyword>
<keyword id="KW-0057">Aromatic amino acid biosynthesis</keyword>
<keyword id="KW-0328">Glycosyltransferase</keyword>
<keyword id="KW-0460">Magnesium</keyword>
<keyword id="KW-0479">Metal-binding</keyword>
<keyword id="KW-0808">Transferase</keyword>
<keyword id="KW-0822">Tryptophan biosynthesis</keyword>
<proteinExistence type="inferred from homology"/>
<protein>
    <recommendedName>
        <fullName evidence="1">Anthranilate phosphoribosyltransferase</fullName>
        <ecNumber evidence="1">2.4.2.18</ecNumber>
    </recommendedName>
</protein>
<gene>
    <name evidence="1" type="primary">trpD</name>
    <name type="ordered locus">Cpar_0577</name>
</gene>
<feature type="chain" id="PRO_1000099793" description="Anthranilate phosphoribosyltransferase">
    <location>
        <begin position="1"/>
        <end position="351"/>
    </location>
</feature>
<feature type="binding site" evidence="1">
    <location>
        <position position="80"/>
    </location>
    <ligand>
        <name>5-phospho-alpha-D-ribose 1-diphosphate</name>
        <dbReference type="ChEBI" id="CHEBI:58017"/>
    </ligand>
</feature>
<feature type="binding site" evidence="1">
    <location>
        <position position="80"/>
    </location>
    <ligand>
        <name>anthranilate</name>
        <dbReference type="ChEBI" id="CHEBI:16567"/>
        <label>1</label>
    </ligand>
</feature>
<feature type="binding site" evidence="1">
    <location>
        <begin position="83"/>
        <end position="84"/>
    </location>
    <ligand>
        <name>5-phospho-alpha-D-ribose 1-diphosphate</name>
        <dbReference type="ChEBI" id="CHEBI:58017"/>
    </ligand>
</feature>
<feature type="binding site" evidence="1">
    <location>
        <position position="88"/>
    </location>
    <ligand>
        <name>5-phospho-alpha-D-ribose 1-diphosphate</name>
        <dbReference type="ChEBI" id="CHEBI:58017"/>
    </ligand>
</feature>
<feature type="binding site" evidence="1">
    <location>
        <begin position="90"/>
        <end position="93"/>
    </location>
    <ligand>
        <name>5-phospho-alpha-D-ribose 1-diphosphate</name>
        <dbReference type="ChEBI" id="CHEBI:58017"/>
    </ligand>
</feature>
<feature type="binding site" evidence="1">
    <location>
        <position position="92"/>
    </location>
    <ligand>
        <name>Mg(2+)</name>
        <dbReference type="ChEBI" id="CHEBI:18420"/>
        <label>1</label>
    </ligand>
</feature>
<feature type="binding site" evidence="1">
    <location>
        <begin position="108"/>
        <end position="116"/>
    </location>
    <ligand>
        <name>5-phospho-alpha-D-ribose 1-diphosphate</name>
        <dbReference type="ChEBI" id="CHEBI:58017"/>
    </ligand>
</feature>
<feature type="binding site" evidence="1">
    <location>
        <position position="111"/>
    </location>
    <ligand>
        <name>anthranilate</name>
        <dbReference type="ChEBI" id="CHEBI:16567"/>
        <label>1</label>
    </ligand>
</feature>
<feature type="binding site" evidence="1">
    <location>
        <position position="120"/>
    </location>
    <ligand>
        <name>5-phospho-alpha-D-ribose 1-diphosphate</name>
        <dbReference type="ChEBI" id="CHEBI:58017"/>
    </ligand>
</feature>
<feature type="binding site" evidence="1">
    <location>
        <position position="166"/>
    </location>
    <ligand>
        <name>anthranilate</name>
        <dbReference type="ChEBI" id="CHEBI:16567"/>
        <label>2</label>
    </ligand>
</feature>
<feature type="binding site" evidence="1">
    <location>
        <position position="229"/>
    </location>
    <ligand>
        <name>Mg(2+)</name>
        <dbReference type="ChEBI" id="CHEBI:18420"/>
        <label>2</label>
    </ligand>
</feature>
<feature type="binding site" evidence="1">
    <location>
        <position position="230"/>
    </location>
    <ligand>
        <name>Mg(2+)</name>
        <dbReference type="ChEBI" id="CHEBI:18420"/>
        <label>1</label>
    </ligand>
</feature>
<feature type="binding site" evidence="1">
    <location>
        <position position="230"/>
    </location>
    <ligand>
        <name>Mg(2+)</name>
        <dbReference type="ChEBI" id="CHEBI:18420"/>
        <label>2</label>
    </ligand>
</feature>
<evidence type="ECO:0000255" key="1">
    <source>
        <dbReference type="HAMAP-Rule" id="MF_00211"/>
    </source>
</evidence>
<organism>
    <name type="scientific">Chlorobaculum parvum (strain DSM 263 / NCIMB 8327)</name>
    <name type="common">Chlorobium vibrioforme subsp. thiosulfatophilum</name>
    <dbReference type="NCBI Taxonomy" id="517417"/>
    <lineage>
        <taxon>Bacteria</taxon>
        <taxon>Pseudomonadati</taxon>
        <taxon>Chlorobiota</taxon>
        <taxon>Chlorobiia</taxon>
        <taxon>Chlorobiales</taxon>
        <taxon>Chlorobiaceae</taxon>
        <taxon>Chlorobaculum</taxon>
    </lineage>
</organism>
<sequence>MRQQELIQKLLAGADLSAQEMEACIDSIMENRFTDAGTGAILALLQKKGVTPTEAIGAYENLMTRVTPITLPAHAVDTCGTGGDHRGTFNISTAAAFIAAGAGVPIAKHGNRSITSKCGSADVLEALGYRVDLPASATEEQFRETGFAFLFAPLYHPSMKAVASIRRELGIRTLFNLLGPLINPAKVKRQFIGVFDPSVMELYADVLIHAGCQHAMIVHGKTEHGDGLDEASVSGPTTIIELFEGRLCHHTVNPEDFGLNRWSIDELAGGDAETNAQIIRQILDGSATQAQIDAALFASAITCYVSGMGSCIDEGMSMSKESLESLAAMENMNRIIEVNNRLAEECNTHEG</sequence>